<dbReference type="EMBL" id="CU329670">
    <property type="protein sequence ID" value="CAC05737.1"/>
    <property type="molecule type" value="Genomic_DNA"/>
</dbReference>
<dbReference type="RefSeq" id="NP_595037.1">
    <property type="nucleotide sequence ID" value="NM_001018171.2"/>
</dbReference>
<dbReference type="STRING" id="284812.Q9HGP9"/>
<dbReference type="PaxDb" id="4896-SPAC212.03.1"/>
<dbReference type="EnsemblFungi" id="SPAC212.03.1">
    <property type="protein sequence ID" value="SPAC212.03.1:pep"/>
    <property type="gene ID" value="SPAC212.03"/>
</dbReference>
<dbReference type="KEGG" id="spo:2542026"/>
<dbReference type="PomBase" id="SPAC212.03"/>
<dbReference type="VEuPathDB" id="FungiDB:SPAC212.03"/>
<dbReference type="HOGENOM" id="CLU_1950070_0_0_1"/>
<dbReference type="InParanoid" id="Q9HGP9"/>
<dbReference type="PRO" id="PR:Q9HGP9"/>
<dbReference type="Proteomes" id="UP000002485">
    <property type="component" value="Chromosome I"/>
</dbReference>
<dbReference type="GO" id="GO:0005829">
    <property type="term" value="C:cytosol"/>
    <property type="evidence" value="ECO:0007005"/>
    <property type="project" value="PomBase"/>
</dbReference>
<dbReference type="GO" id="GO:0005634">
    <property type="term" value="C:nucleus"/>
    <property type="evidence" value="ECO:0007005"/>
    <property type="project" value="PomBase"/>
</dbReference>
<reference evidence="3" key="1">
    <citation type="journal article" date="2002" name="Nature">
        <title>The genome sequence of Schizosaccharomyces pombe.</title>
        <authorList>
            <person name="Wood V."/>
            <person name="Gwilliam R."/>
            <person name="Rajandream M.A."/>
            <person name="Lyne M.H."/>
            <person name="Lyne R."/>
            <person name="Stewart A."/>
            <person name="Sgouros J.G."/>
            <person name="Peat N."/>
            <person name="Hayles J."/>
            <person name="Baker S.G."/>
            <person name="Basham D."/>
            <person name="Bowman S."/>
            <person name="Brooks K."/>
            <person name="Brown D."/>
            <person name="Brown S."/>
            <person name="Chillingworth T."/>
            <person name="Churcher C.M."/>
            <person name="Collins M."/>
            <person name="Connor R."/>
            <person name="Cronin A."/>
            <person name="Davis P."/>
            <person name="Feltwell T."/>
            <person name="Fraser A."/>
            <person name="Gentles S."/>
            <person name="Goble A."/>
            <person name="Hamlin N."/>
            <person name="Harris D.E."/>
            <person name="Hidalgo J."/>
            <person name="Hodgson G."/>
            <person name="Holroyd S."/>
            <person name="Hornsby T."/>
            <person name="Howarth S."/>
            <person name="Huckle E.J."/>
            <person name="Hunt S."/>
            <person name="Jagels K."/>
            <person name="James K.D."/>
            <person name="Jones L."/>
            <person name="Jones M."/>
            <person name="Leather S."/>
            <person name="McDonald S."/>
            <person name="McLean J."/>
            <person name="Mooney P."/>
            <person name="Moule S."/>
            <person name="Mungall K.L."/>
            <person name="Murphy L.D."/>
            <person name="Niblett D."/>
            <person name="Odell C."/>
            <person name="Oliver K."/>
            <person name="O'Neil S."/>
            <person name="Pearson D."/>
            <person name="Quail M.A."/>
            <person name="Rabbinowitsch E."/>
            <person name="Rutherford K.M."/>
            <person name="Rutter S."/>
            <person name="Saunders D."/>
            <person name="Seeger K."/>
            <person name="Sharp S."/>
            <person name="Skelton J."/>
            <person name="Simmonds M.N."/>
            <person name="Squares R."/>
            <person name="Squares S."/>
            <person name="Stevens K."/>
            <person name="Taylor K."/>
            <person name="Taylor R.G."/>
            <person name="Tivey A."/>
            <person name="Walsh S.V."/>
            <person name="Warren T."/>
            <person name="Whitehead S."/>
            <person name="Woodward J.R."/>
            <person name="Volckaert G."/>
            <person name="Aert R."/>
            <person name="Robben J."/>
            <person name="Grymonprez B."/>
            <person name="Weltjens I."/>
            <person name="Vanstreels E."/>
            <person name="Rieger M."/>
            <person name="Schaefer M."/>
            <person name="Mueller-Auer S."/>
            <person name="Gabel C."/>
            <person name="Fuchs M."/>
            <person name="Duesterhoeft A."/>
            <person name="Fritzc C."/>
            <person name="Holzer E."/>
            <person name="Moestl D."/>
            <person name="Hilbert H."/>
            <person name="Borzym K."/>
            <person name="Langer I."/>
            <person name="Beck A."/>
            <person name="Lehrach H."/>
            <person name="Reinhardt R."/>
            <person name="Pohl T.M."/>
            <person name="Eger P."/>
            <person name="Zimmermann W."/>
            <person name="Wedler H."/>
            <person name="Wambutt R."/>
            <person name="Purnelle B."/>
            <person name="Goffeau A."/>
            <person name="Cadieu E."/>
            <person name="Dreano S."/>
            <person name="Gloux S."/>
            <person name="Lelaure V."/>
            <person name="Mottier S."/>
            <person name="Galibert F."/>
            <person name="Aves S.J."/>
            <person name="Xiang Z."/>
            <person name="Hunt C."/>
            <person name="Moore K."/>
            <person name="Hurst S.M."/>
            <person name="Lucas M."/>
            <person name="Rochet M."/>
            <person name="Gaillardin C."/>
            <person name="Tallada V.A."/>
            <person name="Garzon A."/>
            <person name="Thode G."/>
            <person name="Daga R.R."/>
            <person name="Cruzado L."/>
            <person name="Jimenez J."/>
            <person name="Sanchez M."/>
            <person name="del Rey F."/>
            <person name="Benito J."/>
            <person name="Dominguez A."/>
            <person name="Revuelta J.L."/>
            <person name="Moreno S."/>
            <person name="Armstrong J."/>
            <person name="Forsburg S.L."/>
            <person name="Cerutti L."/>
            <person name="Lowe T."/>
            <person name="McCombie W.R."/>
            <person name="Paulsen I."/>
            <person name="Potashkin J."/>
            <person name="Shpakovski G.V."/>
            <person name="Ussery D."/>
            <person name="Barrell B.G."/>
            <person name="Nurse P."/>
        </authorList>
    </citation>
    <scope>NUCLEOTIDE SEQUENCE [LARGE SCALE GENOMIC DNA]</scope>
    <source>
        <strain>972 / ATCC 24843</strain>
    </source>
</reference>
<reference evidence="2" key="2">
    <citation type="journal article" date="2006" name="Nat. Biotechnol.">
        <title>ORFeome cloning and global analysis of protein localization in the fission yeast Schizosaccharomyces pombe.</title>
        <authorList>
            <person name="Matsuyama A."/>
            <person name="Arai R."/>
            <person name="Yashiroda Y."/>
            <person name="Shirai A."/>
            <person name="Kamata A."/>
            <person name="Sekido S."/>
            <person name="Kobayashi Y."/>
            <person name="Hashimoto A."/>
            <person name="Hamamoto M."/>
            <person name="Hiraoka Y."/>
            <person name="Horinouchi S."/>
            <person name="Yoshida M."/>
        </authorList>
    </citation>
    <scope>SUBCELLULAR LOCATION [LARGE SCALE ANALYSIS]</scope>
</reference>
<organism>
    <name type="scientific">Schizosaccharomyces pombe (strain 972 / ATCC 24843)</name>
    <name type="common">Fission yeast</name>
    <dbReference type="NCBI Taxonomy" id="284812"/>
    <lineage>
        <taxon>Eukaryota</taxon>
        <taxon>Fungi</taxon>
        <taxon>Dikarya</taxon>
        <taxon>Ascomycota</taxon>
        <taxon>Taphrinomycotina</taxon>
        <taxon>Schizosaccharomycetes</taxon>
        <taxon>Schizosaccharomycetales</taxon>
        <taxon>Schizosaccharomycetaceae</taxon>
        <taxon>Schizosaccharomyces</taxon>
    </lineage>
</organism>
<evidence type="ECO:0000269" key="1">
    <source>
    </source>
</evidence>
<evidence type="ECO:0000305" key="2"/>
<evidence type="ECO:0000312" key="3">
    <source>
        <dbReference type="EMBL" id="CAC05737.1"/>
    </source>
</evidence>
<feature type="chain" id="PRO_0000306378" description="Uncharacterized protein C212.03">
    <location>
        <begin position="1"/>
        <end position="129"/>
    </location>
</feature>
<name>YM03_SCHPO</name>
<protein>
    <recommendedName>
        <fullName>Uncharacterized protein C212.03</fullName>
    </recommendedName>
</protein>
<comment type="subcellular location">
    <subcellularLocation>
        <location evidence="1">Cytoplasm</location>
        <location evidence="1">Cytosol</location>
    </subcellularLocation>
    <subcellularLocation>
        <location evidence="1">Nucleus</location>
    </subcellularLocation>
</comment>
<proteinExistence type="predicted"/>
<gene>
    <name type="ORF">SPAC212.03</name>
</gene>
<keyword id="KW-0963">Cytoplasm</keyword>
<keyword id="KW-0539">Nucleus</keyword>
<keyword id="KW-1185">Reference proteome</keyword>
<accession>Q9HGP9</accession>
<sequence length="129" mass="15070">MSIEFDDSSRHNMNMTQLMQLGAFDRRSGDDFMVQDFKNGIRDCSGIPVNNRNLAFKAYDAVKQKCDSSIKVFNIQDITIKGATWQHHNCQSTGKWYSQLYDYQNTFIGKQEYNILFDCYSYLKYNLNG</sequence>